<name>KKA6_ACIBA</name>
<comment type="function">
    <text>Resistance to kanamycin and structurally-related aminoglycosides, including amikacin.</text>
</comment>
<comment type="catalytic activity">
    <reaction>
        <text>kanamycin A + ATP = kanamycin 3'-phosphate + ADP + H(+)</text>
        <dbReference type="Rhea" id="RHEA:24256"/>
        <dbReference type="ChEBI" id="CHEBI:15378"/>
        <dbReference type="ChEBI" id="CHEBI:30616"/>
        <dbReference type="ChEBI" id="CHEBI:57909"/>
        <dbReference type="ChEBI" id="CHEBI:58214"/>
        <dbReference type="ChEBI" id="CHEBI:456216"/>
        <dbReference type="EC" id="2.7.1.95"/>
    </reaction>
</comment>
<comment type="similarity">
    <text evidence="2">Belongs to the aminoglycoside phosphotransferase family.</text>
</comment>
<protein>
    <recommendedName>
        <fullName>Aminoglycoside 3'-phosphotransferase</fullName>
        <ecNumber>2.7.1.95</ecNumber>
    </recommendedName>
    <alternativeName>
        <fullName>APH(3')VI</fullName>
    </alternativeName>
    <alternativeName>
        <fullName>Kanamycin kinase, type VI</fullName>
    </alternativeName>
    <alternativeName>
        <fullName>Neomycin-kanamycin phosphotransferase type VI</fullName>
    </alternativeName>
</protein>
<evidence type="ECO:0000250" key="1"/>
<evidence type="ECO:0000305" key="2"/>
<accession>P09885</accession>
<sequence length="259" mass="30327">MELPNIIQQFIGNSVLEPNKIGQSPSDVYSFNRNNETFFLKRSSTLYTETTYSVSREAKMLSWLSEKLKVPELIMTFQDEQFEFMITKAINAKPISALFLTDQELLAIYKEALNLLNSIAIIDCPFISNIDHRLKESKFFIDNQLLDDIDQDDFDTELWGDHKTYLSLWNELTETRVEERLVFSHGDITDSNIFIDKFNEIYFLDLGRAGLADEFVDISFVERCLREDASEETAKIFLKHLKNDRPDKRNYFLKLDELN</sequence>
<organism>
    <name type="scientific">Acinetobacter baumannii</name>
    <dbReference type="NCBI Taxonomy" id="470"/>
    <lineage>
        <taxon>Bacteria</taxon>
        <taxon>Pseudomonadati</taxon>
        <taxon>Pseudomonadota</taxon>
        <taxon>Gammaproteobacteria</taxon>
        <taxon>Moraxellales</taxon>
        <taxon>Moraxellaceae</taxon>
        <taxon>Acinetobacter</taxon>
        <taxon>Acinetobacter calcoaceticus/baumannii complex</taxon>
    </lineage>
</organism>
<proteinExistence type="inferred from homology"/>
<gene>
    <name type="primary">aphA-6</name>
</gene>
<keyword id="KW-0046">Antibiotic resistance</keyword>
<keyword id="KW-0067">ATP-binding</keyword>
<keyword id="KW-0418">Kinase</keyword>
<keyword id="KW-0547">Nucleotide-binding</keyword>
<keyword id="KW-0808">Transferase</keyword>
<feature type="chain" id="PRO_0000204809" description="Aminoglycoside 3'-phosphotransferase">
    <location>
        <begin position="1"/>
        <end position="259"/>
    </location>
</feature>
<feature type="active site" description="Proton acceptor" evidence="1">
    <location>
        <position position="187"/>
    </location>
</feature>
<dbReference type="EC" id="2.7.1.95"/>
<dbReference type="EMBL" id="X07753">
    <property type="protein sequence ID" value="CAA30578.1"/>
    <property type="molecule type" value="Genomic_DNA"/>
</dbReference>
<dbReference type="PIR" id="S01928">
    <property type="entry name" value="S01928"/>
</dbReference>
<dbReference type="RefSeq" id="WP_000422636.1">
    <property type="nucleotide sequence ID" value="NZ_WYAS01000090.1"/>
</dbReference>
<dbReference type="RefSeq" id="YP_009066658.1">
    <property type="nucleotide sequence ID" value="NC_025111.1"/>
</dbReference>
<dbReference type="SMR" id="P09885"/>
<dbReference type="CARD" id="ARO:3002652">
    <property type="molecule name" value="APH(3')-VIa"/>
    <property type="mechanism identifier" value="ARO:0001004"/>
    <property type="mechanism name" value="antibiotic inactivation"/>
</dbReference>
<dbReference type="KEGG" id="ag:CAA30578"/>
<dbReference type="GO" id="GO:0005524">
    <property type="term" value="F:ATP binding"/>
    <property type="evidence" value="ECO:0007669"/>
    <property type="project" value="UniProtKB-KW"/>
</dbReference>
<dbReference type="GO" id="GO:0008910">
    <property type="term" value="F:kanamycin kinase activity"/>
    <property type="evidence" value="ECO:0007669"/>
    <property type="project" value="UniProtKB-EC"/>
</dbReference>
<dbReference type="GO" id="GO:0046677">
    <property type="term" value="P:response to antibiotic"/>
    <property type="evidence" value="ECO:0007669"/>
    <property type="project" value="UniProtKB-KW"/>
</dbReference>
<dbReference type="CDD" id="cd05150">
    <property type="entry name" value="APH"/>
    <property type="match status" value="1"/>
</dbReference>
<dbReference type="Gene3D" id="3.90.1200.10">
    <property type="match status" value="1"/>
</dbReference>
<dbReference type="Gene3D" id="3.30.200.20">
    <property type="entry name" value="Phosphorylase Kinase, domain 1"/>
    <property type="match status" value="1"/>
</dbReference>
<dbReference type="InterPro" id="IPR051678">
    <property type="entry name" value="AGP_Transferase"/>
</dbReference>
<dbReference type="InterPro" id="IPR002575">
    <property type="entry name" value="Aminoglycoside_PTrfase"/>
</dbReference>
<dbReference type="InterPro" id="IPR024165">
    <property type="entry name" value="Kan/Strep_kinase"/>
</dbReference>
<dbReference type="InterPro" id="IPR011009">
    <property type="entry name" value="Kinase-like_dom_sf"/>
</dbReference>
<dbReference type="NCBIfam" id="NF033068">
    <property type="entry name" value="APH_3p"/>
    <property type="match status" value="1"/>
</dbReference>
<dbReference type="NCBIfam" id="NF033062">
    <property type="entry name" value="APH_3p_VI"/>
    <property type="match status" value="1"/>
</dbReference>
<dbReference type="PANTHER" id="PTHR21310:SF41">
    <property type="entry name" value="3'-PHOSPHOTRANSFERASE, PUTATIVE-RELATED"/>
    <property type="match status" value="1"/>
</dbReference>
<dbReference type="PANTHER" id="PTHR21310">
    <property type="entry name" value="AMINOGLYCOSIDE PHOSPHOTRANSFERASE-RELATED-RELATED"/>
    <property type="match status" value="1"/>
</dbReference>
<dbReference type="Pfam" id="PF01636">
    <property type="entry name" value="APH"/>
    <property type="match status" value="1"/>
</dbReference>
<dbReference type="PIRSF" id="PIRSF000706">
    <property type="entry name" value="Kanamycin_kin"/>
    <property type="match status" value="1"/>
</dbReference>
<dbReference type="SUPFAM" id="SSF56112">
    <property type="entry name" value="Protein kinase-like (PK-like)"/>
    <property type="match status" value="1"/>
</dbReference>
<reference key="1">
    <citation type="journal article" date="1988" name="Mol. Microbiol.">
        <title>Nucleotide sequence of Acinetobacter baumannii aphA-6 gene: evolutionary and functional implications of sequence homologies with nucleotide-binding proteins, kinases and other aminoglycoside-modifying enzymes.</title>
        <authorList>
            <person name="Martin P."/>
            <person name="Jullien E."/>
            <person name="Courvalin P."/>
        </authorList>
    </citation>
    <scope>NUCLEOTIDE SEQUENCE [GENOMIC DNA]</scope>
    <source>
        <strain>BM2580</strain>
    </source>
</reference>